<reference key="1">
    <citation type="journal article" date="1997" name="Nature">
        <title>The nucleotide sequence of Saccharomyces cerevisiae chromosome VII.</title>
        <authorList>
            <person name="Tettelin H."/>
            <person name="Agostoni-Carbone M.L."/>
            <person name="Albermann K."/>
            <person name="Albers M."/>
            <person name="Arroyo J."/>
            <person name="Backes U."/>
            <person name="Barreiros T."/>
            <person name="Bertani I."/>
            <person name="Bjourson A.J."/>
            <person name="Brueckner M."/>
            <person name="Bruschi C.V."/>
            <person name="Carignani G."/>
            <person name="Castagnoli L."/>
            <person name="Cerdan E."/>
            <person name="Clemente M.L."/>
            <person name="Coblenz A."/>
            <person name="Coglievina M."/>
            <person name="Coissac E."/>
            <person name="Defoor E."/>
            <person name="Del Bino S."/>
            <person name="Delius H."/>
            <person name="Delneri D."/>
            <person name="de Wergifosse P."/>
            <person name="Dujon B."/>
            <person name="Durand P."/>
            <person name="Entian K.-D."/>
            <person name="Eraso P."/>
            <person name="Escribano V."/>
            <person name="Fabiani L."/>
            <person name="Fartmann B."/>
            <person name="Feroli F."/>
            <person name="Feuermann M."/>
            <person name="Frontali L."/>
            <person name="Garcia-Gonzalez M."/>
            <person name="Garcia-Saez M.I."/>
            <person name="Goffeau A."/>
            <person name="Guerreiro P."/>
            <person name="Hani J."/>
            <person name="Hansen M."/>
            <person name="Hebling U."/>
            <person name="Hernandez K."/>
            <person name="Heumann K."/>
            <person name="Hilger F."/>
            <person name="Hofmann B."/>
            <person name="Indge K.J."/>
            <person name="James C.M."/>
            <person name="Klima R."/>
            <person name="Koetter P."/>
            <person name="Kramer B."/>
            <person name="Kramer W."/>
            <person name="Lauquin G."/>
            <person name="Leuther H."/>
            <person name="Louis E.J."/>
            <person name="Maillier E."/>
            <person name="Marconi A."/>
            <person name="Martegani E."/>
            <person name="Mazon M.J."/>
            <person name="Mazzoni C."/>
            <person name="McReynolds A.D.K."/>
            <person name="Melchioretto P."/>
            <person name="Mewes H.-W."/>
            <person name="Minenkova O."/>
            <person name="Mueller-Auer S."/>
            <person name="Nawrocki A."/>
            <person name="Netter P."/>
            <person name="Neu R."/>
            <person name="Nombela C."/>
            <person name="Oliver S.G."/>
            <person name="Panzeri L."/>
            <person name="Paoluzi S."/>
            <person name="Plevani P."/>
            <person name="Portetelle D."/>
            <person name="Portillo F."/>
            <person name="Potier S."/>
            <person name="Purnelle B."/>
            <person name="Rieger M."/>
            <person name="Riles L."/>
            <person name="Rinaldi T."/>
            <person name="Robben J."/>
            <person name="Rodrigues-Pousada C."/>
            <person name="Rodriguez-Belmonte E."/>
            <person name="Rodriguez-Torres A.M."/>
            <person name="Rose M."/>
            <person name="Ruzzi M."/>
            <person name="Saliola M."/>
            <person name="Sanchez-Perez M."/>
            <person name="Schaefer B."/>
            <person name="Schaefer M."/>
            <person name="Scharfe M."/>
            <person name="Schmidheini T."/>
            <person name="Schreer A."/>
            <person name="Skala J."/>
            <person name="Souciet J.-L."/>
            <person name="Steensma H.Y."/>
            <person name="Talla E."/>
            <person name="Thierry A."/>
            <person name="Vandenbol M."/>
            <person name="van der Aart Q.J.M."/>
            <person name="Van Dyck L."/>
            <person name="Vanoni M."/>
            <person name="Verhasselt P."/>
            <person name="Voet M."/>
            <person name="Volckaert G."/>
            <person name="Wambutt R."/>
            <person name="Watson M.D."/>
            <person name="Weber N."/>
            <person name="Wedler E."/>
            <person name="Wedler H."/>
            <person name="Wipfli P."/>
            <person name="Wolf K."/>
            <person name="Wright L.F."/>
            <person name="Zaccaria P."/>
            <person name="Zimmermann M."/>
            <person name="Zollner A."/>
            <person name="Kleine K."/>
        </authorList>
    </citation>
    <scope>NUCLEOTIDE SEQUENCE [LARGE SCALE GENOMIC DNA]</scope>
    <source>
        <strain>ATCC 204508 / S288c</strain>
    </source>
</reference>
<reference key="2">
    <citation type="journal article" date="2014" name="G3 (Bethesda)">
        <title>The reference genome sequence of Saccharomyces cerevisiae: Then and now.</title>
        <authorList>
            <person name="Engel S.R."/>
            <person name="Dietrich F.S."/>
            <person name="Fisk D.G."/>
            <person name="Binkley G."/>
            <person name="Balakrishnan R."/>
            <person name="Costanzo M.C."/>
            <person name="Dwight S.S."/>
            <person name="Hitz B.C."/>
            <person name="Karra K."/>
            <person name="Nash R.S."/>
            <person name="Weng S."/>
            <person name="Wong E.D."/>
            <person name="Lloyd P."/>
            <person name="Skrzypek M.S."/>
            <person name="Miyasato S.R."/>
            <person name="Simison M."/>
            <person name="Cherry J.M."/>
        </authorList>
    </citation>
    <scope>GENOME REANNOTATION</scope>
    <source>
        <strain>ATCC 204508 / S288c</strain>
    </source>
</reference>
<reference key="3">
    <citation type="journal article" date="2007" name="Genome Res.">
        <title>Approaching a complete repository of sequence-verified protein-encoding clones for Saccharomyces cerevisiae.</title>
        <authorList>
            <person name="Hu Y."/>
            <person name="Rolfs A."/>
            <person name="Bhullar B."/>
            <person name="Murthy T.V.S."/>
            <person name="Zhu C."/>
            <person name="Berger M.F."/>
            <person name="Camargo A.A."/>
            <person name="Kelley F."/>
            <person name="McCarron S."/>
            <person name="Jepson D."/>
            <person name="Richardson A."/>
            <person name="Raphael J."/>
            <person name="Moreira D."/>
            <person name="Taycher E."/>
            <person name="Zuo D."/>
            <person name="Mohr S."/>
            <person name="Kane M.F."/>
            <person name="Williamson J."/>
            <person name="Simpson A.J.G."/>
            <person name="Bulyk M.L."/>
            <person name="Harlow E."/>
            <person name="Marsischky G."/>
            <person name="Kolodner R.D."/>
            <person name="LaBaer J."/>
        </authorList>
    </citation>
    <scope>NUCLEOTIDE SEQUENCE [GENOMIC DNA]</scope>
    <source>
        <strain>ATCC 204508 / S288c</strain>
    </source>
</reference>
<reference key="4">
    <citation type="journal article" date="2003" name="Nature">
        <title>Global analysis of protein localization in budding yeast.</title>
        <authorList>
            <person name="Huh W.-K."/>
            <person name="Falvo J.V."/>
            <person name="Gerke L.C."/>
            <person name="Carroll A.S."/>
            <person name="Howson R.W."/>
            <person name="Weissman J.S."/>
            <person name="O'Shea E.K."/>
        </authorList>
    </citation>
    <scope>SUBCELLULAR LOCATION [LARGE SCALE ANALYSIS]</scope>
</reference>
<reference key="5">
    <citation type="journal article" date="2007" name="Proc. Natl. Acad. Sci. U.S.A.">
        <title>Analysis of phosphorylation sites on proteins from Saccharomyces cerevisiae by electron transfer dissociation (ETD) mass spectrometry.</title>
        <authorList>
            <person name="Chi A."/>
            <person name="Huttenhower C."/>
            <person name="Geer L.Y."/>
            <person name="Coon J.J."/>
            <person name="Syka J.E.P."/>
            <person name="Bai D.L."/>
            <person name="Shabanowitz J."/>
            <person name="Burke D.J."/>
            <person name="Troyanskaya O.G."/>
            <person name="Hunt D.F."/>
        </authorList>
    </citation>
    <scope>PHOSPHORYLATION [LARGE SCALE ANALYSIS] AT SER-148</scope>
    <scope>IDENTIFICATION BY MASS SPECTROMETRY [LARGE SCALE ANALYSIS]</scope>
</reference>
<reference key="6">
    <citation type="journal article" date="2008" name="Mol. Cell. Proteomics">
        <title>A multidimensional chromatography technology for in-depth phosphoproteome analysis.</title>
        <authorList>
            <person name="Albuquerque C.P."/>
            <person name="Smolka M.B."/>
            <person name="Payne S.H."/>
            <person name="Bafna V."/>
            <person name="Eng J."/>
            <person name="Zhou H."/>
        </authorList>
    </citation>
    <scope>PHOSPHORYLATION [LARGE SCALE ANALYSIS] AT SER-113; SER-124; SER-165; SER-174 AND SER-300</scope>
    <scope>IDENTIFICATION BY MASS SPECTROMETRY [LARGE SCALE ANALYSIS]</scope>
</reference>
<reference key="7">
    <citation type="journal article" date="2009" name="Science">
        <title>Global analysis of Cdk1 substrate phosphorylation sites provides insights into evolution.</title>
        <authorList>
            <person name="Holt L.J."/>
            <person name="Tuch B.B."/>
            <person name="Villen J."/>
            <person name="Johnson A.D."/>
            <person name="Gygi S.P."/>
            <person name="Morgan D.O."/>
        </authorList>
    </citation>
    <scope>PHOSPHORYLATION [LARGE SCALE ANALYSIS] AT SER-46; SER-53; THR-56; SER-73; SER-113; SER-165; SER-300; SER-309 AND SER-381</scope>
    <scope>IDENTIFICATION BY MASS SPECTROMETRY [LARGE SCALE ANALYSIS]</scope>
</reference>
<reference key="8">
    <citation type="journal article" date="2015" name="Mol. Biol. Cell">
        <title>A LAPF/phafin1-like protein regulates TORC1 and lysosomal membrane permeabilization in response to endoplasmic reticulum membrane stress.</title>
        <authorList>
            <person name="Kim A."/>
            <person name="Cunningham K.W."/>
        </authorList>
    </citation>
    <scope>FUNCTION</scope>
    <scope>SUBCELLULAR LOCATION</scope>
    <scope>DOMAIN FYVE-TYPE</scope>
    <scope>DISRUPTION PHENOTYPE</scope>
    <scope>MUTAGENESIS OF 621-SER--PHE-635</scope>
</reference>
<reference evidence="13" key="9">
    <citation type="journal article" date="2017" name="J. Cell Sci.">
        <title>Pib2 and the EGO complex are both required for activation of TORC1.</title>
        <authorList>
            <person name="Varlakhanova N.V."/>
            <person name="Mihalevic M.J."/>
            <person name="Bernstein K.A."/>
            <person name="Ford M.G.J."/>
        </authorList>
    </citation>
    <scope>FUNCTION</scope>
    <scope>DISRUPTION PHENOTYPE</scope>
    <source>
        <strain evidence="11">ATCC 200060 / W303</strain>
    </source>
</reference>
<reference key="10">
    <citation type="journal article" date="2017" name="Mol. Cell. Biol.">
        <title>An In vitro TORC1 kinase assay that recapitulates the Gtr-independent glutamine-responsive TORC1 activation mechanism on yeast vacuoles.</title>
        <authorList>
            <person name="Tanigawa M."/>
            <person name="Maeda T."/>
        </authorList>
    </citation>
    <scope>FUNCTION</scope>
    <scope>SUBUNIT</scope>
    <scope>INTERACTION WITH TOR1</scope>
    <scope>DISRUPTION PHENOTYPE</scope>
</reference>
<reference key="11">
    <citation type="journal article" date="2018" name="PLoS Genet.">
        <title>Gtr/Ego-independent TORC1 activation is achieved through a glutamine-sensitive interaction with Pib2 on the vacuolar membrane.</title>
        <authorList>
            <person name="Ukai H."/>
            <person name="Araki Y."/>
            <person name="Kira S."/>
            <person name="Oikawa Y."/>
            <person name="May A.I."/>
            <person name="Noda T."/>
        </authorList>
    </citation>
    <scope>FUNCTION</scope>
    <scope>ACTIVITY REGULATION</scope>
    <scope>SUBUNIT</scope>
    <scope>INTERACTION WITH TOR1; KOG1; TCO89; LST8 AND TOR2</scope>
    <scope>IDENTIFICATION BY MASS SPECTROMETRY</scope>
    <scope>SUBCELLULAR LOCATION</scope>
    <scope>DOMAIN FYVE-TYPE</scope>
    <scope>DISRUPTION PHENOTYPE</scope>
    <scope>MUTAGENESIS OF PRO-337; ARG-475; CYS-522 AND 621-SER--PHE-635</scope>
</reference>
<reference key="12">
    <citation type="journal article" date="2020" name="J. Cell Sci.">
        <title>Amino acid homeostatic control by TORC1 in Saccharomyces cerevisiae under high hydrostatic pressure.</title>
        <authorList>
            <person name="Uemura S."/>
            <person name="Mochizuki T."/>
            <person name="Amemiya K."/>
            <person name="Kurosaka G."/>
            <person name="Yazawa M."/>
            <person name="Nakamoto K."/>
            <person name="Ishikawa Y."/>
            <person name="Izawa S."/>
            <person name="Abe F."/>
        </authorList>
    </citation>
    <scope>FUNCTION</scope>
    <scope>DISRUPTION PHENOTYPE</scope>
</reference>
<reference key="13">
    <citation type="journal article" date="2021" name="Commun. Biol.">
        <title>A glutamine sensor that directly activates TORC1.</title>
        <authorList>
            <person name="Tanigawa M."/>
            <person name="Yamamoto K."/>
            <person name="Nagatoishi S."/>
            <person name="Nagata K."/>
            <person name="Noshiro D."/>
            <person name="Noda N.N."/>
            <person name="Tsumoto K."/>
            <person name="Maeda T."/>
        </authorList>
    </citation>
    <scope>FUNCTION</scope>
    <scope>ACTIVITY REGULATION</scope>
    <scope>SUBUNIT</scope>
    <scope>INTERACTION WITH TOR1</scope>
    <scope>DISRUPTION PHENOTYPE</scope>
    <scope>MUTAGENESIS OF PRO-337; LEU-340; ARG-341 AND VAL-626</scope>
</reference>
<name>PIB2_YEAST</name>
<protein>
    <recommendedName>
        <fullName evidence="12">Glutamine sensor PIB2</fullName>
    </recommendedName>
    <alternativeName>
        <fullName evidence="13">Phosphatidylinositol 3-phosphate-binding protein 2</fullName>
    </alternativeName>
</protein>
<keyword id="KW-0472">Membrane</keyword>
<keyword id="KW-0479">Metal-binding</keyword>
<keyword id="KW-0597">Phosphoprotein</keyword>
<keyword id="KW-1185">Reference proteome</keyword>
<keyword id="KW-0807">Transducer</keyword>
<keyword id="KW-0926">Vacuole</keyword>
<keyword id="KW-0862">Zinc</keyword>
<keyword id="KW-0863">Zinc-finger</keyword>
<evidence type="ECO:0000250" key="1">
    <source>
        <dbReference type="UniProtKB" id="A0A8H4C2S2"/>
    </source>
</evidence>
<evidence type="ECO:0000255" key="2">
    <source>
        <dbReference type="PROSITE-ProRule" id="PRU00091"/>
    </source>
</evidence>
<evidence type="ECO:0000256" key="3">
    <source>
        <dbReference type="SAM" id="MobiDB-lite"/>
    </source>
</evidence>
<evidence type="ECO:0000269" key="4">
    <source>
    </source>
</evidence>
<evidence type="ECO:0000269" key="5">
    <source>
    </source>
</evidence>
<evidence type="ECO:0000269" key="6">
    <source>
    </source>
</evidence>
<evidence type="ECO:0000269" key="7">
    <source>
    </source>
</evidence>
<evidence type="ECO:0000269" key="8">
    <source>
    </source>
</evidence>
<evidence type="ECO:0000269" key="9">
    <source>
    </source>
</evidence>
<evidence type="ECO:0000269" key="10">
    <source>
    </source>
</evidence>
<evidence type="ECO:0000303" key="11">
    <source>
    </source>
</evidence>
<evidence type="ECO:0000303" key="12">
    <source>
    </source>
</evidence>
<evidence type="ECO:0000305" key="13"/>
<evidence type="ECO:0000312" key="14">
    <source>
        <dbReference type="SGD" id="S000002991"/>
    </source>
</evidence>
<evidence type="ECO:0007744" key="15">
    <source>
    </source>
</evidence>
<evidence type="ECO:0007744" key="16">
    <source>
    </source>
</evidence>
<evidence type="ECO:0007744" key="17">
    <source>
    </source>
</evidence>
<accession>P53191</accession>
<accession>D6VUB4</accession>
<accession>E9P8Z2</accession>
<proteinExistence type="evidence at protein level"/>
<feature type="chain" id="PRO_0000058425" description="Glutamine sensor PIB2">
    <location>
        <begin position="1"/>
        <end position="635"/>
    </location>
</feature>
<feature type="zinc finger region" description="FYVE-type; atypical" evidence="2">
    <location>
        <begin position="452"/>
        <end position="527"/>
    </location>
</feature>
<feature type="region of interest" description="May play a role in attenuating TORC1 signaling" evidence="1">
    <location>
        <begin position="1"/>
        <end position="164"/>
    </location>
</feature>
<feature type="region of interest" description="Disordered" evidence="3">
    <location>
        <begin position="1"/>
        <end position="110"/>
    </location>
</feature>
<feature type="region of interest" description="Disordered" evidence="3">
    <location>
        <begin position="123"/>
        <end position="181"/>
    </location>
</feature>
<feature type="region of interest" description="Disordered" evidence="3">
    <location>
        <begin position="224"/>
        <end position="254"/>
    </location>
</feature>
<feature type="region of interest" description="Required for interaction with TORC1" evidence="10">
    <location>
        <begin position="304"/>
        <end position="440"/>
    </location>
</feature>
<feature type="region of interest" description="Disordered" evidence="3">
    <location>
        <begin position="534"/>
        <end position="557"/>
    </location>
</feature>
<feature type="region of interest" description="Disordered" evidence="3">
    <location>
        <begin position="570"/>
        <end position="623"/>
    </location>
</feature>
<feature type="region of interest" description="May be required for TORC1 activation" evidence="10">
    <location>
        <begin position="620"/>
        <end position="635"/>
    </location>
</feature>
<feature type="compositionally biased region" description="Basic and acidic residues" evidence="3">
    <location>
        <begin position="33"/>
        <end position="44"/>
    </location>
</feature>
<feature type="compositionally biased region" description="Polar residues" evidence="3">
    <location>
        <begin position="67"/>
        <end position="85"/>
    </location>
</feature>
<feature type="compositionally biased region" description="Low complexity" evidence="3">
    <location>
        <begin position="238"/>
        <end position="254"/>
    </location>
</feature>
<feature type="compositionally biased region" description="Acidic residues" evidence="3">
    <location>
        <begin position="543"/>
        <end position="553"/>
    </location>
</feature>
<feature type="compositionally biased region" description="Acidic residues" evidence="3">
    <location>
        <begin position="601"/>
        <end position="616"/>
    </location>
</feature>
<feature type="binding site" evidence="2">
    <location>
        <position position="458"/>
    </location>
    <ligand>
        <name>Zn(2+)</name>
        <dbReference type="ChEBI" id="CHEBI:29105"/>
        <label>1</label>
    </ligand>
</feature>
<feature type="binding site" evidence="2">
    <location>
        <position position="461"/>
    </location>
    <ligand>
        <name>Zn(2+)</name>
        <dbReference type="ChEBI" id="CHEBI:29105"/>
        <label>1</label>
    </ligand>
</feature>
<feature type="binding site" evidence="2">
    <location>
        <position position="474"/>
    </location>
    <ligand>
        <name>Zn(2+)</name>
        <dbReference type="ChEBI" id="CHEBI:29105"/>
        <label>2</label>
    </ligand>
</feature>
<feature type="binding site" evidence="2">
    <location>
        <position position="477"/>
    </location>
    <ligand>
        <name>Zn(2+)</name>
        <dbReference type="ChEBI" id="CHEBI:29105"/>
        <label>2</label>
    </ligand>
</feature>
<feature type="binding site" evidence="2">
    <location>
        <position position="482"/>
    </location>
    <ligand>
        <name>Zn(2+)</name>
        <dbReference type="ChEBI" id="CHEBI:29105"/>
        <label>1</label>
    </ligand>
</feature>
<feature type="binding site" evidence="2">
    <location>
        <position position="485"/>
    </location>
    <ligand>
        <name>Zn(2+)</name>
        <dbReference type="ChEBI" id="CHEBI:29105"/>
        <label>1</label>
    </ligand>
</feature>
<feature type="binding site" evidence="2">
    <location>
        <position position="519"/>
    </location>
    <ligand>
        <name>Zn(2+)</name>
        <dbReference type="ChEBI" id="CHEBI:29105"/>
        <label>2</label>
    </ligand>
</feature>
<feature type="binding site" evidence="2">
    <location>
        <position position="522"/>
    </location>
    <ligand>
        <name>Zn(2+)</name>
        <dbReference type="ChEBI" id="CHEBI:29105"/>
        <label>2</label>
    </ligand>
</feature>
<feature type="modified residue" description="Phosphoserine" evidence="17">
    <location>
        <position position="46"/>
    </location>
</feature>
<feature type="modified residue" description="Phosphoserine" evidence="17">
    <location>
        <position position="53"/>
    </location>
</feature>
<feature type="modified residue" description="Phosphothreonine" evidence="17">
    <location>
        <position position="56"/>
    </location>
</feature>
<feature type="modified residue" description="Phosphoserine" evidence="17">
    <location>
        <position position="73"/>
    </location>
</feature>
<feature type="modified residue" description="Phosphoserine" evidence="16 17">
    <location>
        <position position="113"/>
    </location>
</feature>
<feature type="modified residue" description="Phosphoserine" evidence="16">
    <location>
        <position position="124"/>
    </location>
</feature>
<feature type="modified residue" description="Phosphoserine" evidence="15">
    <location>
        <position position="148"/>
    </location>
</feature>
<feature type="modified residue" description="Phosphoserine" evidence="16 17">
    <location>
        <position position="165"/>
    </location>
</feature>
<feature type="modified residue" description="Phosphoserine" evidence="16">
    <location>
        <position position="174"/>
    </location>
</feature>
<feature type="modified residue" description="Phosphoserine" evidence="16 17">
    <location>
        <position position="300"/>
    </location>
</feature>
<feature type="modified residue" description="Phosphoserine" evidence="17">
    <location>
        <position position="309"/>
    </location>
</feature>
<feature type="modified residue" description="Phosphoserine" evidence="17">
    <location>
        <position position="381"/>
    </location>
</feature>
<feature type="mutagenesis site" description="Mildly decreases interaction with and activation of TOR1 in response to glutamine. Sensitive to rapamycin." evidence="10">
    <original>P</original>
    <variation>A</variation>
    <location>
        <position position="337"/>
    </location>
</feature>
<feature type="mutagenesis site" description="Decreases interaction with and activation of TOR1." evidence="8">
    <original>P</original>
    <variation>S</variation>
    <location>
        <position position="337"/>
    </location>
</feature>
<feature type="mutagenesis site" description="Decreases interaction with and activation of TOR1 in response to glutamine. Sensitive to rapamycin." evidence="10">
    <original>L</original>
    <variation>A</variation>
    <location>
        <position position="340"/>
    </location>
</feature>
<feature type="mutagenesis site" description="Abolishes interaction with and activation of TOR1 in response to glutamine. Sensitive to rapamycin." evidence="10">
    <original>R</original>
    <variation>A</variation>
    <location>
        <position position="341"/>
    </location>
</feature>
<feature type="mutagenesis site" description="Decreases localization to the vacuolar membrane and results in rapamycin sensitivity; when associated with S-522." evidence="8">
    <original>R</original>
    <variation>A</variation>
    <location>
        <position position="475"/>
    </location>
</feature>
<feature type="mutagenesis site" description="Decreases localization to the vacuolar membrane and results in rapamycin sensitivity; when associated with A-475." evidence="8">
    <original>C</original>
    <variation>S</variation>
    <location>
        <position position="522"/>
    </location>
</feature>
<feature type="mutagenesis site" description="Abnormal TORC1 activation in glutamine-replete conditions. Sensitive to caffeine. Resistance to tunicamycin (endoplasmic reticulum stressor) administered together with FK506 (calcineurin inhibitor)." evidence="5 8">
    <location>
        <begin position="621"/>
        <end position="635"/>
    </location>
</feature>
<feature type="mutagenesis site" description="Increases activity in presence of glutamine." evidence="10">
    <original>V</original>
    <variation>A</variation>
    <location>
        <position position="626"/>
    </location>
</feature>
<feature type="sequence conflict" description="In Ref. 3; AAT92937." evidence="13" ref="3">
    <original>E</original>
    <variation>G</variation>
    <location>
        <position position="152"/>
    </location>
</feature>
<sequence length="635" mass="70617">MTALHSVSKTPAIKEEEEDGDERDGRGVPLGPRNHDYRGRKGDEESGADTVTSPITFEKKKIAPRASTHSEQSILSSISLKSMVNQHRQQQLQQESSTGAGTGFVDRKQQIQSPAMVSILRKNSAEENVRSSHSSKLGEGQIDGRKASASKEIGKTLPFTDDQRSNPELDPTNSVVDVSRGKNTKSKTVFNELEDDADDDDEVRQKNLTTQALRKLSSFKMNASSNLRLSKENKAKESSSSSTSSVSSSSTSKVENIVDKLTTTNSSSMSQLRFGNTNVIIDSVNHAAKPPHQQMLRKPSLEFLPQPASSTNLNFNSNKHKSNVRQISNPKKPLYIPAVLRKVSETNITNDDLLNATLSSYYKKASNLEHGFNPSKSQSASVQNANNLRIISSQSSVQSNTSSILESYKNKISSYLFPNSIPNSDRINLIPTISNRNSARVNPPTKDHWIPDSKRNSCRYCHKPFTLWERKHHCRHCGDIFCQDHLRHWLYLDSQANFIMINELNNGGINGGGTLCKICDDCLVEYENLSTTNHNANTNEDNINVEEGEDDDNDNRKKLRNYYKNRQMNALFRPKKGGSSQEHATVDRDTTTPIQVKSNDEEADNENTGGEQEEGNDVLGSVIGSVPANWNWSSF</sequence>
<organism>
    <name type="scientific">Saccharomyces cerevisiae (strain ATCC 204508 / S288c)</name>
    <name type="common">Baker's yeast</name>
    <dbReference type="NCBI Taxonomy" id="559292"/>
    <lineage>
        <taxon>Eukaryota</taxon>
        <taxon>Fungi</taxon>
        <taxon>Dikarya</taxon>
        <taxon>Ascomycota</taxon>
        <taxon>Saccharomycotina</taxon>
        <taxon>Saccharomycetes</taxon>
        <taxon>Saccharomycetales</taxon>
        <taxon>Saccharomycetaceae</taxon>
        <taxon>Saccharomyces</taxon>
    </lineage>
</organism>
<gene>
    <name evidence="14" type="primary">PIB2</name>
    <name evidence="14" type="ordered locus">YGL023C</name>
</gene>
<dbReference type="EMBL" id="Z72545">
    <property type="protein sequence ID" value="CAA96724.1"/>
    <property type="molecule type" value="Genomic_DNA"/>
</dbReference>
<dbReference type="EMBL" id="Z72544">
    <property type="protein sequence ID" value="CAA96723.1"/>
    <property type="molecule type" value="Genomic_DNA"/>
</dbReference>
<dbReference type="EMBL" id="AY692918">
    <property type="protein sequence ID" value="AAT92937.1"/>
    <property type="molecule type" value="Genomic_DNA"/>
</dbReference>
<dbReference type="EMBL" id="BK006941">
    <property type="protein sequence ID" value="DAA08075.1"/>
    <property type="molecule type" value="Genomic_DNA"/>
</dbReference>
<dbReference type="PIR" id="S64025">
    <property type="entry name" value="S64025"/>
</dbReference>
<dbReference type="RefSeq" id="NP_011492.3">
    <property type="nucleotide sequence ID" value="NM_001180888.3"/>
</dbReference>
<dbReference type="SMR" id="P53191"/>
<dbReference type="BioGRID" id="33223">
    <property type="interactions" value="319"/>
</dbReference>
<dbReference type="DIP" id="DIP-6378N"/>
<dbReference type="FunCoup" id="P53191">
    <property type="interactions" value="211"/>
</dbReference>
<dbReference type="IntAct" id="P53191">
    <property type="interactions" value="8"/>
</dbReference>
<dbReference type="MINT" id="P53191"/>
<dbReference type="STRING" id="4932.YGL023C"/>
<dbReference type="GlyGen" id="P53191">
    <property type="glycosylation" value="1 site, 1 O-linked glycan (1 site)"/>
</dbReference>
<dbReference type="iPTMnet" id="P53191"/>
<dbReference type="PaxDb" id="4932-YGL023C"/>
<dbReference type="PeptideAtlas" id="P53191"/>
<dbReference type="EnsemblFungi" id="YGL023C_mRNA">
    <property type="protein sequence ID" value="YGL023C"/>
    <property type="gene ID" value="YGL023C"/>
</dbReference>
<dbReference type="GeneID" id="852861"/>
<dbReference type="KEGG" id="sce:YGL023C"/>
<dbReference type="AGR" id="SGD:S000002991"/>
<dbReference type="SGD" id="S000002991">
    <property type="gene designation" value="PIB2"/>
</dbReference>
<dbReference type="VEuPathDB" id="FungiDB:YGL023C"/>
<dbReference type="eggNOG" id="KOG1729">
    <property type="taxonomic scope" value="Eukaryota"/>
</dbReference>
<dbReference type="HOGENOM" id="CLU_020649_0_0_1"/>
<dbReference type="InParanoid" id="P53191"/>
<dbReference type="OMA" id="RHWLYLD"/>
<dbReference type="OrthoDB" id="10018316at2759"/>
<dbReference type="BioCyc" id="YEAST:G3O-30542-MONOMER"/>
<dbReference type="BioGRID-ORCS" id="852861">
    <property type="hits" value="10 hits in 10 CRISPR screens"/>
</dbReference>
<dbReference type="PRO" id="PR:P53191"/>
<dbReference type="Proteomes" id="UP000002311">
    <property type="component" value="Chromosome VII"/>
</dbReference>
<dbReference type="RNAct" id="P53191">
    <property type="molecule type" value="protein"/>
</dbReference>
<dbReference type="GO" id="GO:0000329">
    <property type="term" value="C:fungal-type vacuole membrane"/>
    <property type="evidence" value="ECO:0000314"/>
    <property type="project" value="SGD"/>
</dbReference>
<dbReference type="GO" id="GO:0005739">
    <property type="term" value="C:mitochondrion"/>
    <property type="evidence" value="ECO:0007005"/>
    <property type="project" value="SGD"/>
</dbReference>
<dbReference type="GO" id="GO:0140785">
    <property type="term" value="F:amino acid sensor activity"/>
    <property type="evidence" value="ECO:0000314"/>
    <property type="project" value="SGD"/>
</dbReference>
<dbReference type="GO" id="GO:1902485">
    <property type="term" value="F:L-cysteine binding"/>
    <property type="evidence" value="ECO:0000314"/>
    <property type="project" value="SGD"/>
</dbReference>
<dbReference type="GO" id="GO:0032266">
    <property type="term" value="F:phosphatidylinositol-3-phosphate binding"/>
    <property type="evidence" value="ECO:0000315"/>
    <property type="project" value="SGD"/>
</dbReference>
<dbReference type="GO" id="GO:0008270">
    <property type="term" value="F:zinc ion binding"/>
    <property type="evidence" value="ECO:0007669"/>
    <property type="project" value="UniProtKB-KW"/>
</dbReference>
<dbReference type="GO" id="GO:1904263">
    <property type="term" value="P:positive regulation of TORC1 signaling"/>
    <property type="evidence" value="ECO:0000314"/>
    <property type="project" value="SGD"/>
</dbReference>
<dbReference type="GO" id="GO:0007165">
    <property type="term" value="P:signal transduction"/>
    <property type="evidence" value="ECO:0007669"/>
    <property type="project" value="UniProtKB-KW"/>
</dbReference>
<dbReference type="CDD" id="cd15760">
    <property type="entry name" value="FYVE_scVPS27p_like"/>
    <property type="match status" value="1"/>
</dbReference>
<dbReference type="FunFam" id="3.30.40.10:FF:000801">
    <property type="entry name" value="PIB2p protein"/>
    <property type="match status" value="1"/>
</dbReference>
<dbReference type="Gene3D" id="3.30.40.10">
    <property type="entry name" value="Zinc/RING finger domain, C3HC4 (zinc finger)"/>
    <property type="match status" value="1"/>
</dbReference>
<dbReference type="InterPro" id="IPR000306">
    <property type="entry name" value="Znf_FYVE"/>
</dbReference>
<dbReference type="InterPro" id="IPR017455">
    <property type="entry name" value="Znf_FYVE-rel"/>
</dbReference>
<dbReference type="InterPro" id="IPR011011">
    <property type="entry name" value="Znf_FYVE_PHD"/>
</dbReference>
<dbReference type="InterPro" id="IPR013083">
    <property type="entry name" value="Znf_RING/FYVE/PHD"/>
</dbReference>
<dbReference type="PANTHER" id="PTHR23164">
    <property type="entry name" value="EARLY ENDOSOME ANTIGEN 1"/>
    <property type="match status" value="1"/>
</dbReference>
<dbReference type="PANTHER" id="PTHR23164:SF30">
    <property type="entry name" value="EARLY ENDOSOME ANTIGEN 1"/>
    <property type="match status" value="1"/>
</dbReference>
<dbReference type="Pfam" id="PF01363">
    <property type="entry name" value="FYVE"/>
    <property type="match status" value="1"/>
</dbReference>
<dbReference type="SMART" id="SM00064">
    <property type="entry name" value="FYVE"/>
    <property type="match status" value="1"/>
</dbReference>
<dbReference type="SUPFAM" id="SSF57903">
    <property type="entry name" value="FYVE/PHD zinc finger"/>
    <property type="match status" value="1"/>
</dbReference>
<dbReference type="PROSITE" id="PS50178">
    <property type="entry name" value="ZF_FYVE"/>
    <property type="match status" value="1"/>
</dbReference>
<comment type="function">
    <text evidence="5 6 7 8 9 10">Functions as an intracellular glutamine sensor that directly activates the TORC1 signaling pathway, to promote cell growth when glutamine is available (PubMed:26510498, PubMed:28483912, PubMed:29698392, PubMed:32801125, PubMed:34535752). May play a role in repressing NPR1 activity independently of TORC1 signaling (PubMed:28993463).</text>
</comment>
<comment type="activity regulation">
    <text evidence="8 10">Activated by glutamine (PubMed:29698392, PubMed:34535752). May also be activated by cysteine (PubMed:34535752).</text>
</comment>
<comment type="subunit">
    <text evidence="6 8 10">Interacts with the TORC1 complex when activated by glutamine or cysteine (PubMed:28483912, PubMed:29698392, PubMed:34535752). Interacts with TOR1; glutamine enhances the interaction (PubMed:28483912, PubMed:29698392, PubMed:34535752). Interacts with KOG1; glutamine enhances the interaction (PubMed:29698392). Interacts with TCO89 (PubMed:29698392). Interacts with LST8; glutamine enhances the interaction (PubMed:29698392). Interacts with TOR2; glutamine enhances the interaction (PubMed:29698392).</text>
</comment>
<comment type="subcellular location">
    <subcellularLocation>
        <location evidence="4 5 8">Vacuole membrane</location>
        <topology evidence="4">Peripheral membrane protein</topology>
    </subcellularLocation>
</comment>
<comment type="domain">
    <text evidence="5 8">The FYVE-type zinc finger domain contributes to vacuolar localization.</text>
</comment>
<comment type="disruption phenotype">
    <text evidence="5 6 7 8 9 10">Abnormal activation of TORC1 signaling in nitrogen-replete conditions (glutamine or leucine nitrogen source), and during high hydrostatic pressure (mechanical stress) (PubMed:28483912, PubMed:28993463, PubMed:29698392, PubMed:32801125). Increases cellular levels of glutamine and alanine during high hydrostatic pressure (mechanical stress) (PubMed:32801125). Sensitive to rapamycin (TORC1 signaling-inhibitor), caffeine, and high hydrostatic pressure (mechanical stress) (PubMed:26510498, PubMed:28993463, PubMed:29698392, PubMed:32801125, PubMed:34535752). Abnormal TORC1-reactivation following inactivaton by rapamycin (TORC1 signaling-inhibitor) (PubMed:28993463). Resistance to tunicamycin (endoplasmic reticulum stressor) administered together with FK506 (calcineurin inhibitor) (PubMed:26510498). Abnormal localization of TOR1 to vacuoles (PubMed:28993463). Localization of GTR1 and GTR2 to vacuoles is normal (PubMed:28993463) Localization of TORC1 to vacuoles is normal (PubMed:28483912). Simultaneous disruption of GTR1 results in TOR1 mislocalization and loss of TORC1 activity and viability (PubMed:29698392). Simultaneous disruption of EGO1 results in loss of viability (PubMed:29698392). Macroautophagy appears normal (PubMed:28993463).</text>
</comment>